<evidence type="ECO:0000250" key="1"/>
<evidence type="ECO:0000305" key="2"/>
<gene>
    <name type="primary">RPS13</name>
</gene>
<reference key="1">
    <citation type="journal article" date="1990" name="Mol. Gen. Genet.">
        <title>Species-specific RNA editing patterns in the mitochondrial rps13 transcripts of Oenothera and Daucus.</title>
        <authorList>
            <person name="Schuster W."/>
            <person name="Wissinger B."/>
            <person name="Unseld M."/>
            <person name="Brennicke A."/>
        </authorList>
    </citation>
    <scope>NUCLEOTIDE SEQUENCE [MRNA]</scope>
</reference>
<geneLocation type="mitochondrion"/>
<keyword id="KW-0496">Mitochondrion</keyword>
<keyword id="KW-0687">Ribonucleoprotein</keyword>
<keyword id="KW-0689">Ribosomal protein</keyword>
<keyword id="KW-0694">RNA-binding</keyword>
<keyword id="KW-0699">rRNA-binding</keyword>
<organism>
    <name type="scientific">Daucus carota</name>
    <name type="common">Wild carrot</name>
    <dbReference type="NCBI Taxonomy" id="4039"/>
    <lineage>
        <taxon>Eukaryota</taxon>
        <taxon>Viridiplantae</taxon>
        <taxon>Streptophyta</taxon>
        <taxon>Embryophyta</taxon>
        <taxon>Tracheophyta</taxon>
        <taxon>Spermatophyta</taxon>
        <taxon>Magnoliopsida</taxon>
        <taxon>eudicotyledons</taxon>
        <taxon>Gunneridae</taxon>
        <taxon>Pentapetalae</taxon>
        <taxon>asterids</taxon>
        <taxon>campanulids</taxon>
        <taxon>Apiales</taxon>
        <taxon>Apiaceae</taxon>
        <taxon>Apioideae</taxon>
        <taxon>Scandiceae</taxon>
        <taxon>Daucinae</taxon>
        <taxon>Daucus</taxon>
        <taxon>Daucus sect. Daucus</taxon>
    </lineage>
</organism>
<name>RT13_DAUCA</name>
<proteinExistence type="inferred from homology"/>
<accession>P23209</accession>
<protein>
    <recommendedName>
        <fullName evidence="2">Small ribosomal subunit protein uS13m</fullName>
    </recommendedName>
    <alternativeName>
        <fullName>Ribosomal protein S13, mitochondrial</fullName>
    </alternativeName>
</protein>
<sequence length="116" mass="13495">MLYISGARLVADKQVRIALTKMYGIGPKKAIQVCYRLGISGNIKIKELTKYQIDQMEQMIGQDHVVHWELKRGERADIERFISISCYRGIRHQDGLPLRGQRTHTNARTCRKQIRK</sequence>
<feature type="chain" id="PRO_0000132202" description="Small ribosomal subunit protein uS13m">
    <location>
        <begin position="1"/>
        <end position="116"/>
    </location>
</feature>
<comment type="function">
    <text evidence="1">Located at the top of the head of the small subunit, it contacts several helices of the 18S rRNA.</text>
</comment>
<comment type="subunit">
    <text>Part of the small ribosomal subunit.</text>
</comment>
<comment type="subcellular location">
    <subcellularLocation>
        <location>Mitochondrion</location>
    </subcellularLocation>
</comment>
<comment type="similarity">
    <text evidence="2">Belongs to the universal ribosomal protein uS13 family.</text>
</comment>
<dbReference type="EMBL" id="X54417">
    <property type="protein sequence ID" value="CAA38281.1"/>
    <property type="molecule type" value="mRNA"/>
</dbReference>
<dbReference type="PIR" id="S20229">
    <property type="entry name" value="R3PZ3M"/>
</dbReference>
<dbReference type="SMR" id="P23209"/>
<dbReference type="GO" id="GO:0005739">
    <property type="term" value="C:mitochondrion"/>
    <property type="evidence" value="ECO:0007669"/>
    <property type="project" value="UniProtKB-SubCell"/>
</dbReference>
<dbReference type="GO" id="GO:0015935">
    <property type="term" value="C:small ribosomal subunit"/>
    <property type="evidence" value="ECO:0007669"/>
    <property type="project" value="TreeGrafter"/>
</dbReference>
<dbReference type="GO" id="GO:0019843">
    <property type="term" value="F:rRNA binding"/>
    <property type="evidence" value="ECO:0007669"/>
    <property type="project" value="UniProtKB-KW"/>
</dbReference>
<dbReference type="GO" id="GO:0003735">
    <property type="term" value="F:structural constituent of ribosome"/>
    <property type="evidence" value="ECO:0007669"/>
    <property type="project" value="InterPro"/>
</dbReference>
<dbReference type="GO" id="GO:0006412">
    <property type="term" value="P:translation"/>
    <property type="evidence" value="ECO:0007669"/>
    <property type="project" value="InterPro"/>
</dbReference>
<dbReference type="FunFam" id="1.10.8.50:FF:000011">
    <property type="entry name" value="Ribosomal protein S13"/>
    <property type="match status" value="1"/>
</dbReference>
<dbReference type="FunFam" id="4.10.910.10:FF:000003">
    <property type="entry name" value="Ribosomal protein S13"/>
    <property type="match status" value="1"/>
</dbReference>
<dbReference type="Gene3D" id="1.10.8.50">
    <property type="match status" value="1"/>
</dbReference>
<dbReference type="Gene3D" id="4.10.910.10">
    <property type="entry name" value="30s ribosomal protein s13, domain 2"/>
    <property type="match status" value="1"/>
</dbReference>
<dbReference type="HAMAP" id="MF_01315">
    <property type="entry name" value="Ribosomal_uS13"/>
    <property type="match status" value="1"/>
</dbReference>
<dbReference type="InterPro" id="IPR027437">
    <property type="entry name" value="Rbsml_uS13_C"/>
</dbReference>
<dbReference type="InterPro" id="IPR001892">
    <property type="entry name" value="Ribosomal_uS13"/>
</dbReference>
<dbReference type="InterPro" id="IPR010979">
    <property type="entry name" value="Ribosomal_uS13-like_H2TH"/>
</dbReference>
<dbReference type="InterPro" id="IPR018269">
    <property type="entry name" value="Ribosomal_uS13_CS"/>
</dbReference>
<dbReference type="PANTHER" id="PTHR10871">
    <property type="entry name" value="30S RIBOSOMAL PROTEIN S13/40S RIBOSOMAL PROTEIN S18"/>
    <property type="match status" value="1"/>
</dbReference>
<dbReference type="PANTHER" id="PTHR10871:SF8">
    <property type="entry name" value="SMALL RIBOSOMAL SUBUNIT PROTEIN US13M"/>
    <property type="match status" value="1"/>
</dbReference>
<dbReference type="Pfam" id="PF00416">
    <property type="entry name" value="Ribosomal_S13"/>
    <property type="match status" value="1"/>
</dbReference>
<dbReference type="PIRSF" id="PIRSF002134">
    <property type="entry name" value="Ribosomal_S13"/>
    <property type="match status" value="1"/>
</dbReference>
<dbReference type="SUPFAM" id="SSF46946">
    <property type="entry name" value="S13-like H2TH domain"/>
    <property type="match status" value="1"/>
</dbReference>
<dbReference type="PROSITE" id="PS00646">
    <property type="entry name" value="RIBOSOMAL_S13_1"/>
    <property type="match status" value="1"/>
</dbReference>
<dbReference type="PROSITE" id="PS50159">
    <property type="entry name" value="RIBOSOMAL_S13_2"/>
    <property type="match status" value="1"/>
</dbReference>